<reference key="1">
    <citation type="journal article" date="2000" name="Nature">
        <title>Sequence and analysis of chromosome 1 of the plant Arabidopsis thaliana.</title>
        <authorList>
            <person name="Theologis A."/>
            <person name="Ecker J.R."/>
            <person name="Palm C.J."/>
            <person name="Federspiel N.A."/>
            <person name="Kaul S."/>
            <person name="White O."/>
            <person name="Alonso J."/>
            <person name="Altafi H."/>
            <person name="Araujo R."/>
            <person name="Bowman C.L."/>
            <person name="Brooks S.Y."/>
            <person name="Buehler E."/>
            <person name="Chan A."/>
            <person name="Chao Q."/>
            <person name="Chen H."/>
            <person name="Cheuk R.F."/>
            <person name="Chin C.W."/>
            <person name="Chung M.K."/>
            <person name="Conn L."/>
            <person name="Conway A.B."/>
            <person name="Conway A.R."/>
            <person name="Creasy T.H."/>
            <person name="Dewar K."/>
            <person name="Dunn P."/>
            <person name="Etgu P."/>
            <person name="Feldblyum T.V."/>
            <person name="Feng J.-D."/>
            <person name="Fong B."/>
            <person name="Fujii C.Y."/>
            <person name="Gill J.E."/>
            <person name="Goldsmith A.D."/>
            <person name="Haas B."/>
            <person name="Hansen N.F."/>
            <person name="Hughes B."/>
            <person name="Huizar L."/>
            <person name="Hunter J.L."/>
            <person name="Jenkins J."/>
            <person name="Johnson-Hopson C."/>
            <person name="Khan S."/>
            <person name="Khaykin E."/>
            <person name="Kim C.J."/>
            <person name="Koo H.L."/>
            <person name="Kremenetskaia I."/>
            <person name="Kurtz D.B."/>
            <person name="Kwan A."/>
            <person name="Lam B."/>
            <person name="Langin-Hooper S."/>
            <person name="Lee A."/>
            <person name="Lee J.M."/>
            <person name="Lenz C.A."/>
            <person name="Li J.H."/>
            <person name="Li Y.-P."/>
            <person name="Lin X."/>
            <person name="Liu S.X."/>
            <person name="Liu Z.A."/>
            <person name="Luros J.S."/>
            <person name="Maiti R."/>
            <person name="Marziali A."/>
            <person name="Militscher J."/>
            <person name="Miranda M."/>
            <person name="Nguyen M."/>
            <person name="Nierman W.C."/>
            <person name="Osborne B.I."/>
            <person name="Pai G."/>
            <person name="Peterson J."/>
            <person name="Pham P.K."/>
            <person name="Rizzo M."/>
            <person name="Rooney T."/>
            <person name="Rowley D."/>
            <person name="Sakano H."/>
            <person name="Salzberg S.L."/>
            <person name="Schwartz J.R."/>
            <person name="Shinn P."/>
            <person name="Southwick A.M."/>
            <person name="Sun H."/>
            <person name="Tallon L.J."/>
            <person name="Tambunga G."/>
            <person name="Toriumi M.J."/>
            <person name="Town C.D."/>
            <person name="Utterback T."/>
            <person name="Van Aken S."/>
            <person name="Vaysberg M."/>
            <person name="Vysotskaia V.S."/>
            <person name="Walker M."/>
            <person name="Wu D."/>
            <person name="Yu G."/>
            <person name="Fraser C.M."/>
            <person name="Venter J.C."/>
            <person name="Davis R.W."/>
        </authorList>
    </citation>
    <scope>NUCLEOTIDE SEQUENCE [LARGE SCALE GENOMIC DNA]</scope>
    <source>
        <strain>cv. Columbia</strain>
    </source>
</reference>
<reference key="2">
    <citation type="journal article" date="2017" name="Plant J.">
        <title>Araport11: a complete reannotation of the Arabidopsis thaliana reference genome.</title>
        <authorList>
            <person name="Cheng C.Y."/>
            <person name="Krishnakumar V."/>
            <person name="Chan A.P."/>
            <person name="Thibaud-Nissen F."/>
            <person name="Schobel S."/>
            <person name="Town C.D."/>
        </authorList>
    </citation>
    <scope>GENOME REANNOTATION</scope>
    <source>
        <strain>cv. Columbia</strain>
    </source>
</reference>
<reference key="3">
    <citation type="submission" date="2005-05" db="EMBL/GenBank/DDBJ databases">
        <title>Arabidopsis ORF clones.</title>
        <authorList>
            <person name="Cheuk R.F."/>
            <person name="Chen H."/>
            <person name="Kim C.J."/>
            <person name="Shinn P."/>
            <person name="Ecker J.R."/>
        </authorList>
    </citation>
    <scope>NUCLEOTIDE SEQUENCE [MRNA]</scope>
    <source>
        <strain>cv. Columbia</strain>
    </source>
</reference>
<reference key="4">
    <citation type="submission" date="2006-07" db="EMBL/GenBank/DDBJ databases">
        <title>Large-scale analysis of RIKEN Arabidopsis full-length (RAFL) cDNAs.</title>
        <authorList>
            <person name="Totoki Y."/>
            <person name="Seki M."/>
            <person name="Ishida J."/>
            <person name="Nakajima M."/>
            <person name="Enju A."/>
            <person name="Kamiya A."/>
            <person name="Narusaka M."/>
            <person name="Shin-i T."/>
            <person name="Nakagawa M."/>
            <person name="Sakamoto N."/>
            <person name="Oishi K."/>
            <person name="Kohara Y."/>
            <person name="Kobayashi M."/>
            <person name="Toyoda A."/>
            <person name="Sakaki Y."/>
            <person name="Sakurai T."/>
            <person name="Iida K."/>
            <person name="Akiyama K."/>
            <person name="Satou M."/>
            <person name="Toyoda T."/>
            <person name="Konagaya A."/>
            <person name="Carninci P."/>
            <person name="Kawai J."/>
            <person name="Hayashizaki Y."/>
            <person name="Shinozaki K."/>
        </authorList>
    </citation>
    <scope>NUCLEOTIDE SEQUENCE [LARGE SCALE MRNA]</scope>
    <source>
        <strain>cv. Columbia</strain>
    </source>
</reference>
<reference key="5">
    <citation type="journal article" date="2002" name="J. Biol. Chem.">
        <title>Functional cloning and characterization of a plant efflux carrier for multidrug and heavy metal detoxification.</title>
        <authorList>
            <person name="Li L."/>
            <person name="He Z."/>
            <person name="Pandey G.K."/>
            <person name="Tsuchiya T."/>
            <person name="Luan S."/>
        </authorList>
    </citation>
    <scope>GENE FAMILY</scope>
    <scope>NOMENCLATURE</scope>
</reference>
<reference key="6">
    <citation type="journal article" date="2003" name="Eur. J. Biochem.">
        <title>The multidrug/oligosaccharidyl-lipid/polysaccharide (MOP) exporter superfamily.</title>
        <authorList>
            <person name="Hvorup R.N."/>
            <person name="Winnen B."/>
            <person name="Chang A.B."/>
            <person name="Jiang Y."/>
            <person name="Zhou X.F."/>
            <person name="Saier M.H. Jr."/>
        </authorList>
    </citation>
    <scope>GENE FAMILY</scope>
</reference>
<reference key="7">
    <citation type="journal article" date="2009" name="Plant Physiol.">
        <title>Cis-element- and transcriptome-based screening of root hair-specific genes and their functional characterization in Arabidopsis.</title>
        <authorList>
            <person name="Won S.-K."/>
            <person name="Lee Y.-J."/>
            <person name="Lee H.-Y."/>
            <person name="Heo Y.-K."/>
            <person name="Cho M."/>
            <person name="Cho H.-T."/>
        </authorList>
    </citation>
    <scope>DISRUPTION PHENOTYPE</scope>
    <scope>FUNCTION</scope>
</reference>
<evidence type="ECO:0000255" key="1"/>
<evidence type="ECO:0000269" key="2">
    <source>
    </source>
</evidence>
<evidence type="ECO:0000303" key="3">
    <source>
    </source>
</evidence>
<evidence type="ECO:0000303" key="4">
    <source>
    </source>
</evidence>
<evidence type="ECO:0000305" key="5"/>
<evidence type="ECO:0000312" key="6">
    <source>
        <dbReference type="Araport" id="AT1G12950"/>
    </source>
</evidence>
<evidence type="ECO:0000312" key="7">
    <source>
        <dbReference type="EMBL" id="AAF78500.1"/>
    </source>
</evidence>
<comment type="function">
    <text evidence="2">Positively mediates root hair elongation.</text>
</comment>
<comment type="subcellular location">
    <subcellularLocation>
        <location evidence="1">Membrane</location>
        <topology evidence="1">Multi-pass membrane protein</topology>
    </subcellularLocation>
</comment>
<comment type="disruption phenotype">
    <text evidence="2">Short root hairs.</text>
</comment>
<comment type="similarity">
    <text evidence="5">Belongs to the multi antimicrobial extrusion (MATE) (TC 2.A.66.1) family.</text>
</comment>
<accession>Q9LPV4</accession>
<accession>Q0WSV3</accession>
<proteinExistence type="evidence at transcript level"/>
<keyword id="KW-0472">Membrane</keyword>
<keyword id="KW-1185">Reference proteome</keyword>
<keyword id="KW-0812">Transmembrane</keyword>
<keyword id="KW-1133">Transmembrane helix</keyword>
<keyword id="KW-0813">Transport</keyword>
<dbReference type="EMBL" id="AC012187">
    <property type="protein sequence ID" value="AAF78500.1"/>
    <property type="molecule type" value="Genomic_DNA"/>
</dbReference>
<dbReference type="EMBL" id="CP002684">
    <property type="protein sequence ID" value="AEE28953.1"/>
    <property type="molecule type" value="Genomic_DNA"/>
</dbReference>
<dbReference type="EMBL" id="BT023437">
    <property type="protein sequence ID" value="AAY56428.1"/>
    <property type="molecule type" value="mRNA"/>
</dbReference>
<dbReference type="EMBL" id="AK227815">
    <property type="protein sequence ID" value="BAE99795.1"/>
    <property type="molecule type" value="mRNA"/>
</dbReference>
<dbReference type="PIR" id="D86263">
    <property type="entry name" value="D86263"/>
</dbReference>
<dbReference type="RefSeq" id="NP_172755.1">
    <property type="nucleotide sequence ID" value="NM_101166.4"/>
</dbReference>
<dbReference type="SMR" id="Q9LPV4"/>
<dbReference type="FunCoup" id="Q9LPV4">
    <property type="interactions" value="2"/>
</dbReference>
<dbReference type="IntAct" id="Q9LPV4">
    <property type="interactions" value="2"/>
</dbReference>
<dbReference type="STRING" id="3702.Q9LPV4"/>
<dbReference type="PaxDb" id="3702-AT1G12950.1"/>
<dbReference type="ProMEX" id="Q9LPV4"/>
<dbReference type="ProteomicsDB" id="222183"/>
<dbReference type="EnsemblPlants" id="AT1G12950.1">
    <property type="protein sequence ID" value="AT1G12950.1"/>
    <property type="gene ID" value="AT1G12950"/>
</dbReference>
<dbReference type="GeneID" id="837853"/>
<dbReference type="Gramene" id="AT1G12950.1">
    <property type="protein sequence ID" value="AT1G12950.1"/>
    <property type="gene ID" value="AT1G12950"/>
</dbReference>
<dbReference type="KEGG" id="ath:AT1G12950"/>
<dbReference type="Araport" id="AT1G12950"/>
<dbReference type="TAIR" id="AT1G12950">
    <property type="gene designation" value="RHS2"/>
</dbReference>
<dbReference type="eggNOG" id="KOG1347">
    <property type="taxonomic scope" value="Eukaryota"/>
</dbReference>
<dbReference type="HOGENOM" id="CLU_012893_1_4_1"/>
<dbReference type="InParanoid" id="Q9LPV4"/>
<dbReference type="OMA" id="WLVMSRF"/>
<dbReference type="OrthoDB" id="2126698at2759"/>
<dbReference type="PhylomeDB" id="Q9LPV4"/>
<dbReference type="PRO" id="PR:Q9LPV4"/>
<dbReference type="Proteomes" id="UP000006548">
    <property type="component" value="Chromosome 1"/>
</dbReference>
<dbReference type="ExpressionAtlas" id="Q9LPV4">
    <property type="expression patterns" value="baseline and differential"/>
</dbReference>
<dbReference type="GO" id="GO:0016020">
    <property type="term" value="C:membrane"/>
    <property type="evidence" value="ECO:0007669"/>
    <property type="project" value="UniProtKB-SubCell"/>
</dbReference>
<dbReference type="GO" id="GO:0015297">
    <property type="term" value="F:antiporter activity"/>
    <property type="evidence" value="ECO:0007669"/>
    <property type="project" value="InterPro"/>
</dbReference>
<dbReference type="GO" id="GO:0042910">
    <property type="term" value="F:xenobiotic transmembrane transporter activity"/>
    <property type="evidence" value="ECO:0007669"/>
    <property type="project" value="InterPro"/>
</dbReference>
<dbReference type="GO" id="GO:0048767">
    <property type="term" value="P:root hair elongation"/>
    <property type="evidence" value="ECO:0000315"/>
    <property type="project" value="UniProtKB"/>
</dbReference>
<dbReference type="GO" id="GO:1990961">
    <property type="term" value="P:xenobiotic detoxification by transmembrane export across the plasma membrane"/>
    <property type="evidence" value="ECO:0007669"/>
    <property type="project" value="InterPro"/>
</dbReference>
<dbReference type="CDD" id="cd13132">
    <property type="entry name" value="MATE_eukaryotic"/>
    <property type="match status" value="1"/>
</dbReference>
<dbReference type="InterPro" id="IPR045069">
    <property type="entry name" value="MATE_euk"/>
</dbReference>
<dbReference type="InterPro" id="IPR002528">
    <property type="entry name" value="MATE_fam"/>
</dbReference>
<dbReference type="NCBIfam" id="TIGR00797">
    <property type="entry name" value="matE"/>
    <property type="match status" value="1"/>
</dbReference>
<dbReference type="PANTHER" id="PTHR11206">
    <property type="entry name" value="MULTIDRUG RESISTANCE PROTEIN"/>
    <property type="match status" value="1"/>
</dbReference>
<dbReference type="Pfam" id="PF01554">
    <property type="entry name" value="MatE"/>
    <property type="match status" value="2"/>
</dbReference>
<organism>
    <name type="scientific">Arabidopsis thaliana</name>
    <name type="common">Mouse-ear cress</name>
    <dbReference type="NCBI Taxonomy" id="3702"/>
    <lineage>
        <taxon>Eukaryota</taxon>
        <taxon>Viridiplantae</taxon>
        <taxon>Streptophyta</taxon>
        <taxon>Embryophyta</taxon>
        <taxon>Tracheophyta</taxon>
        <taxon>Spermatophyta</taxon>
        <taxon>Magnoliopsida</taxon>
        <taxon>eudicotyledons</taxon>
        <taxon>Gunneridae</taxon>
        <taxon>Pentapetalae</taxon>
        <taxon>rosids</taxon>
        <taxon>malvids</taxon>
        <taxon>Brassicales</taxon>
        <taxon>Brassicaceae</taxon>
        <taxon>Camelineae</taxon>
        <taxon>Arabidopsis</taxon>
    </lineage>
</organism>
<name>DTX31_ARATH</name>
<feature type="chain" id="PRO_0000434072" description="Protein DETOXIFICATION 31">
    <location>
        <begin position="1"/>
        <end position="522"/>
    </location>
</feature>
<feature type="transmembrane region" description="Helical" evidence="1">
    <location>
        <begin position="89"/>
        <end position="109"/>
    </location>
</feature>
<feature type="transmembrane region" description="Helical" evidence="1">
    <location>
        <begin position="113"/>
        <end position="133"/>
    </location>
</feature>
<feature type="transmembrane region" description="Helical" evidence="1">
    <location>
        <begin position="154"/>
        <end position="174"/>
    </location>
</feature>
<feature type="transmembrane region" description="Helical" evidence="1">
    <location>
        <begin position="183"/>
        <end position="203"/>
    </location>
</feature>
<feature type="transmembrane region" description="Helical" evidence="1">
    <location>
        <begin position="217"/>
        <end position="237"/>
    </location>
</feature>
<feature type="transmembrane region" description="Helical" evidence="1">
    <location>
        <begin position="249"/>
        <end position="269"/>
    </location>
</feature>
<feature type="transmembrane region" description="Helical" evidence="1">
    <location>
        <begin position="299"/>
        <end position="319"/>
    </location>
</feature>
<feature type="transmembrane region" description="Helical" evidence="1">
    <location>
        <begin position="324"/>
        <end position="344"/>
    </location>
</feature>
<feature type="transmembrane region" description="Helical" evidence="1">
    <location>
        <begin position="371"/>
        <end position="391"/>
    </location>
</feature>
<feature type="transmembrane region" description="Helical" evidence="1">
    <location>
        <begin position="415"/>
        <end position="435"/>
    </location>
</feature>
<feature type="transmembrane region" description="Helical" evidence="1">
    <location>
        <begin position="441"/>
        <end position="461"/>
    </location>
</feature>
<feature type="transmembrane region" description="Helical" evidence="1">
    <location>
        <begin position="471"/>
        <end position="491"/>
    </location>
</feature>
<feature type="sequence conflict" description="In Ref. 4; BAE99795." evidence="5" ref="4">
    <original>G</original>
    <variation>R</variation>
    <location>
        <position position="290"/>
    </location>
</feature>
<gene>
    <name evidence="3" type="primary">DTX31</name>
    <name evidence="4" type="synonym">RHS2</name>
    <name evidence="6" type="ordered locus">At1g12950</name>
    <name evidence="7" type="ORF">F13K23.21</name>
</gene>
<sequence>MEKDNDFKDPFLASTEEEELDPATQKALMEYLGVGSRASSLVSFSSTAVDIPPISGVGDFVREFRIESRKLWKLAGPAIFTTMSQYSLGAVTQVFAGHISTLALAAVSIENSVIAGFSFGIMLGMGSALETLCGQAFGAGKVSMLGVYLQRSWVILSVTALFLSLIYIFAAPILTFIGQTAAISAMAGIFSIYMIPQIFAYAINFPTAKFLQSQSKIMVMAGISGVVLVIHSFFTWLVMSRLHWGLPGLALVLNTSWWVIVVAQLVYIFNCTCGEAWSGFTWEAFHNLWGFVKLSLASAAMLCLEIWYFMALVLFAGYLKNAEVSVAALSICMNILGWAAMVAFGTNAAVSVRVSNELGASHPRTAKFSLVVAVILSTAIGMFIAAGLLFFRNEYPVLFVEDEEVRNVVRELTPMLAFCIVINNVQPVLSGVAVGAGWQAVVAYVNIACYYLFGVPFGLLLGFKLEYGVMGIWWGMVTGTFVQSIVLTWMICKTNWEKEASMAEERIKEWGGVPAEKETLLN</sequence>
<protein>
    <recommendedName>
        <fullName evidence="3">Protein DETOXIFICATION 31</fullName>
        <shortName evidence="3">AtDTX31</shortName>
    </recommendedName>
    <alternativeName>
        <fullName evidence="5">Multidrug and toxic compound extrusion protein 31</fullName>
        <shortName evidence="5">MATE protein 31</shortName>
    </alternativeName>
    <alternativeName>
        <fullName evidence="4">Protein ROOT HAIR SPECIFIC 2</fullName>
    </alternativeName>
</protein>